<name>THII_ECODH</name>
<sequence length="482" mass="54973">MKFIIKLFPEITIKSQSVRLRFIKILTGNIRNVLKHYDETLAVVRHWDNIEVRAKDENQRLAIRDALTRIPGIHHILEVEDVPFTDMHDIFEKALVQYRDQLEGKTFCVRVKRRGKHDFSSIDVERYVGGGLNQHIESARVKLTNPDVTVHLEVEDDRLLLIKGRYEGIGGFPIGTQEDVLSLISGGFDSGVSSYMLMRRGCRVHYCFFNLGGAAHEIGVRQVAHYLWNRFGSSHRVRFVAINFEPVVGEILEKIDDGQMGVILKRMMVRAASKVAERYGVQALVTGEALGQVSSQTLTNLRLIDNVSDTLILRPLISYDKEHIINLARQIGTEDFARTMPEYCGVISKSPTVKAVKSKIEAEEEKFDFSILDKVVEEANNVDIREIAQQTEQEVVEVETVNGFGPNDVILDIRSIDEQEDKPLKVEGIDVVSLPFYKLSTKFGDLDQNKTWLLWCERGVMSRLQALYLREQGFNNVKVYRP</sequence>
<comment type="function">
    <text evidence="1">Catalyzes the ATP-dependent transfer of a sulfur to tRNA to produce 4-thiouridine in position 8 of tRNAs, which functions as a near-UV photosensor. Also catalyzes the transfer of sulfur to the sulfur carrier protein ThiS, forming ThiS-thiocarboxylate. This is a step in the synthesis of thiazole, in the thiamine biosynthesis pathway. The sulfur is donated as persulfide by IscS.</text>
</comment>
<comment type="catalytic activity">
    <reaction evidence="1">
        <text>[ThiI sulfur-carrier protein]-S-sulfanyl-L-cysteine + a uridine in tRNA + 2 reduced [2Fe-2S]-[ferredoxin] + ATP + H(+) = [ThiI sulfur-carrier protein]-L-cysteine + a 4-thiouridine in tRNA + 2 oxidized [2Fe-2S]-[ferredoxin] + AMP + diphosphate</text>
        <dbReference type="Rhea" id="RHEA:24176"/>
        <dbReference type="Rhea" id="RHEA-COMP:10000"/>
        <dbReference type="Rhea" id="RHEA-COMP:10001"/>
        <dbReference type="Rhea" id="RHEA-COMP:13337"/>
        <dbReference type="Rhea" id="RHEA-COMP:13338"/>
        <dbReference type="Rhea" id="RHEA-COMP:13339"/>
        <dbReference type="Rhea" id="RHEA-COMP:13340"/>
        <dbReference type="ChEBI" id="CHEBI:15378"/>
        <dbReference type="ChEBI" id="CHEBI:29950"/>
        <dbReference type="ChEBI" id="CHEBI:30616"/>
        <dbReference type="ChEBI" id="CHEBI:33019"/>
        <dbReference type="ChEBI" id="CHEBI:33737"/>
        <dbReference type="ChEBI" id="CHEBI:33738"/>
        <dbReference type="ChEBI" id="CHEBI:61963"/>
        <dbReference type="ChEBI" id="CHEBI:65315"/>
        <dbReference type="ChEBI" id="CHEBI:136798"/>
        <dbReference type="ChEBI" id="CHEBI:456215"/>
        <dbReference type="EC" id="2.8.1.4"/>
    </reaction>
</comment>
<comment type="catalytic activity">
    <reaction evidence="1">
        <text>[ThiS sulfur-carrier protein]-C-terminal Gly-Gly-AMP + S-sulfanyl-L-cysteinyl-[cysteine desulfurase] + AH2 = [ThiS sulfur-carrier protein]-C-terminal-Gly-aminoethanethioate + L-cysteinyl-[cysteine desulfurase] + A + AMP + 2 H(+)</text>
        <dbReference type="Rhea" id="RHEA:43340"/>
        <dbReference type="Rhea" id="RHEA-COMP:12157"/>
        <dbReference type="Rhea" id="RHEA-COMP:12158"/>
        <dbReference type="Rhea" id="RHEA-COMP:12910"/>
        <dbReference type="Rhea" id="RHEA-COMP:19908"/>
        <dbReference type="ChEBI" id="CHEBI:13193"/>
        <dbReference type="ChEBI" id="CHEBI:15378"/>
        <dbReference type="ChEBI" id="CHEBI:17499"/>
        <dbReference type="ChEBI" id="CHEBI:29950"/>
        <dbReference type="ChEBI" id="CHEBI:61963"/>
        <dbReference type="ChEBI" id="CHEBI:90618"/>
        <dbReference type="ChEBI" id="CHEBI:232372"/>
        <dbReference type="ChEBI" id="CHEBI:456215"/>
    </reaction>
</comment>
<comment type="pathway">
    <text evidence="1">Cofactor biosynthesis; thiamine diphosphate biosynthesis.</text>
</comment>
<comment type="subcellular location">
    <subcellularLocation>
        <location evidence="1">Cytoplasm</location>
    </subcellularLocation>
</comment>
<comment type="similarity">
    <text evidence="1">Belongs to the ThiI family.</text>
</comment>
<protein>
    <recommendedName>
        <fullName evidence="1">tRNA sulfurtransferase</fullName>
        <ecNumber evidence="1">2.8.1.4</ecNumber>
    </recommendedName>
    <alternativeName>
        <fullName evidence="1">Sulfur carrier protein ThiS sulfurtransferase</fullName>
    </alternativeName>
    <alternativeName>
        <fullName evidence="1">Thiamine biosynthesis protein ThiI</fullName>
    </alternativeName>
    <alternativeName>
        <fullName evidence="1">tRNA 4-thiouridine synthase</fullName>
    </alternativeName>
</protein>
<keyword id="KW-0067">ATP-binding</keyword>
<keyword id="KW-0963">Cytoplasm</keyword>
<keyword id="KW-1015">Disulfide bond</keyword>
<keyword id="KW-0547">Nucleotide-binding</keyword>
<keyword id="KW-0676">Redox-active center</keyword>
<keyword id="KW-0694">RNA-binding</keyword>
<keyword id="KW-0784">Thiamine biosynthesis</keyword>
<keyword id="KW-0808">Transferase</keyword>
<keyword id="KW-0820">tRNA-binding</keyword>
<gene>
    <name evidence="1" type="primary">thiI</name>
    <name type="ordered locus">ECDH10B_0379</name>
</gene>
<feature type="chain" id="PRO_1000090012" description="tRNA sulfurtransferase">
    <location>
        <begin position="1"/>
        <end position="482"/>
    </location>
</feature>
<feature type="domain" description="THUMP" evidence="1">
    <location>
        <begin position="61"/>
        <end position="165"/>
    </location>
</feature>
<feature type="domain" description="Rhodanese" evidence="1">
    <location>
        <begin position="404"/>
        <end position="482"/>
    </location>
</feature>
<feature type="active site" description="Cysteine persulfide intermediate" evidence="1">
    <location>
        <position position="456"/>
    </location>
</feature>
<feature type="binding site" evidence="1">
    <location>
        <begin position="183"/>
        <end position="184"/>
    </location>
    <ligand>
        <name>ATP</name>
        <dbReference type="ChEBI" id="CHEBI:30616"/>
    </ligand>
</feature>
<feature type="binding site" evidence="1">
    <location>
        <position position="265"/>
    </location>
    <ligand>
        <name>ATP</name>
        <dbReference type="ChEBI" id="CHEBI:30616"/>
    </ligand>
</feature>
<feature type="binding site" evidence="1">
    <location>
        <position position="287"/>
    </location>
    <ligand>
        <name>ATP</name>
        <dbReference type="ChEBI" id="CHEBI:30616"/>
    </ligand>
</feature>
<feature type="binding site" evidence="1">
    <location>
        <position position="296"/>
    </location>
    <ligand>
        <name>ATP</name>
        <dbReference type="ChEBI" id="CHEBI:30616"/>
    </ligand>
</feature>
<feature type="disulfide bond" description="Redox-active" evidence="1">
    <location>
        <begin position="344"/>
        <end position="456"/>
    </location>
</feature>
<evidence type="ECO:0000255" key="1">
    <source>
        <dbReference type="HAMAP-Rule" id="MF_00021"/>
    </source>
</evidence>
<accession>B1XF11</accession>
<organism>
    <name type="scientific">Escherichia coli (strain K12 / DH10B)</name>
    <dbReference type="NCBI Taxonomy" id="316385"/>
    <lineage>
        <taxon>Bacteria</taxon>
        <taxon>Pseudomonadati</taxon>
        <taxon>Pseudomonadota</taxon>
        <taxon>Gammaproteobacteria</taxon>
        <taxon>Enterobacterales</taxon>
        <taxon>Enterobacteriaceae</taxon>
        <taxon>Escherichia</taxon>
    </lineage>
</organism>
<proteinExistence type="inferred from homology"/>
<reference key="1">
    <citation type="journal article" date="2008" name="J. Bacteriol.">
        <title>The complete genome sequence of Escherichia coli DH10B: insights into the biology of a laboratory workhorse.</title>
        <authorList>
            <person name="Durfee T."/>
            <person name="Nelson R."/>
            <person name="Baldwin S."/>
            <person name="Plunkett G. III"/>
            <person name="Burland V."/>
            <person name="Mau B."/>
            <person name="Petrosino J.F."/>
            <person name="Qin X."/>
            <person name="Muzny D.M."/>
            <person name="Ayele M."/>
            <person name="Gibbs R.A."/>
            <person name="Csorgo B."/>
            <person name="Posfai G."/>
            <person name="Weinstock G.M."/>
            <person name="Blattner F.R."/>
        </authorList>
    </citation>
    <scope>NUCLEOTIDE SEQUENCE [LARGE SCALE GENOMIC DNA]</scope>
    <source>
        <strain>K12 / DH10B</strain>
    </source>
</reference>
<dbReference type="EC" id="2.8.1.4" evidence="1"/>
<dbReference type="EMBL" id="CP000948">
    <property type="protein sequence ID" value="ACB01551.1"/>
    <property type="molecule type" value="Genomic_DNA"/>
</dbReference>
<dbReference type="RefSeq" id="WP_000668662.1">
    <property type="nucleotide sequence ID" value="NC_010473.1"/>
</dbReference>
<dbReference type="SMR" id="B1XF11"/>
<dbReference type="KEGG" id="ecd:ECDH10B_0379"/>
<dbReference type="HOGENOM" id="CLU_037952_4_1_6"/>
<dbReference type="UniPathway" id="UPA00060"/>
<dbReference type="GO" id="GO:0005829">
    <property type="term" value="C:cytosol"/>
    <property type="evidence" value="ECO:0007669"/>
    <property type="project" value="TreeGrafter"/>
</dbReference>
<dbReference type="GO" id="GO:0005524">
    <property type="term" value="F:ATP binding"/>
    <property type="evidence" value="ECO:0007669"/>
    <property type="project" value="UniProtKB-UniRule"/>
</dbReference>
<dbReference type="GO" id="GO:0004810">
    <property type="term" value="F:CCA tRNA nucleotidyltransferase activity"/>
    <property type="evidence" value="ECO:0007669"/>
    <property type="project" value="InterPro"/>
</dbReference>
<dbReference type="GO" id="GO:0000049">
    <property type="term" value="F:tRNA binding"/>
    <property type="evidence" value="ECO:0007669"/>
    <property type="project" value="UniProtKB-UniRule"/>
</dbReference>
<dbReference type="GO" id="GO:0140741">
    <property type="term" value="F:tRNA-uracil-4 sulfurtransferase activity"/>
    <property type="evidence" value="ECO:0007669"/>
    <property type="project" value="UniProtKB-EC"/>
</dbReference>
<dbReference type="GO" id="GO:0009228">
    <property type="term" value="P:thiamine biosynthetic process"/>
    <property type="evidence" value="ECO:0007669"/>
    <property type="project" value="UniProtKB-KW"/>
</dbReference>
<dbReference type="GO" id="GO:0009229">
    <property type="term" value="P:thiamine diphosphate biosynthetic process"/>
    <property type="evidence" value="ECO:0007669"/>
    <property type="project" value="UniProtKB-UniRule"/>
</dbReference>
<dbReference type="GO" id="GO:0052837">
    <property type="term" value="P:thiazole biosynthetic process"/>
    <property type="evidence" value="ECO:0007669"/>
    <property type="project" value="InterPro"/>
</dbReference>
<dbReference type="GO" id="GO:0002937">
    <property type="term" value="P:tRNA 4-thiouridine biosynthesis"/>
    <property type="evidence" value="ECO:0007669"/>
    <property type="project" value="TreeGrafter"/>
</dbReference>
<dbReference type="CDD" id="cd01712">
    <property type="entry name" value="PPase_ThiI"/>
    <property type="match status" value="1"/>
</dbReference>
<dbReference type="CDD" id="cd00158">
    <property type="entry name" value="RHOD"/>
    <property type="match status" value="1"/>
</dbReference>
<dbReference type="CDD" id="cd11716">
    <property type="entry name" value="THUMP_ThiI"/>
    <property type="match status" value="1"/>
</dbReference>
<dbReference type="FunFam" id="3.30.2130.30:FF:000002">
    <property type="entry name" value="tRNA sulfurtransferase"/>
    <property type="match status" value="1"/>
</dbReference>
<dbReference type="FunFam" id="3.40.250.10:FF:000003">
    <property type="entry name" value="tRNA sulfurtransferase"/>
    <property type="match status" value="1"/>
</dbReference>
<dbReference type="FunFam" id="3.40.50.620:FF:000029">
    <property type="entry name" value="tRNA sulfurtransferase"/>
    <property type="match status" value="1"/>
</dbReference>
<dbReference type="Gene3D" id="3.30.2130.30">
    <property type="match status" value="1"/>
</dbReference>
<dbReference type="Gene3D" id="3.40.50.620">
    <property type="entry name" value="HUPs"/>
    <property type="match status" value="1"/>
</dbReference>
<dbReference type="Gene3D" id="3.40.250.10">
    <property type="entry name" value="Rhodanese-like domain"/>
    <property type="match status" value="1"/>
</dbReference>
<dbReference type="HAMAP" id="MF_00021">
    <property type="entry name" value="ThiI"/>
    <property type="match status" value="1"/>
</dbReference>
<dbReference type="InterPro" id="IPR001763">
    <property type="entry name" value="Rhodanese-like_dom"/>
</dbReference>
<dbReference type="InterPro" id="IPR036873">
    <property type="entry name" value="Rhodanese-like_dom_sf"/>
</dbReference>
<dbReference type="InterPro" id="IPR014729">
    <property type="entry name" value="Rossmann-like_a/b/a_fold"/>
</dbReference>
<dbReference type="InterPro" id="IPR020536">
    <property type="entry name" value="ThiI_AANH"/>
</dbReference>
<dbReference type="InterPro" id="IPR054173">
    <property type="entry name" value="ThiI_fer"/>
</dbReference>
<dbReference type="InterPro" id="IPR049961">
    <property type="entry name" value="ThiI_N"/>
</dbReference>
<dbReference type="InterPro" id="IPR026340">
    <property type="entry name" value="THII_Thiazole_biosynth_dom"/>
</dbReference>
<dbReference type="InterPro" id="IPR004114">
    <property type="entry name" value="THUMP_dom"/>
</dbReference>
<dbReference type="InterPro" id="IPR049962">
    <property type="entry name" value="THUMP_ThiI"/>
</dbReference>
<dbReference type="InterPro" id="IPR003720">
    <property type="entry name" value="tRNA_STrfase"/>
</dbReference>
<dbReference type="InterPro" id="IPR050102">
    <property type="entry name" value="tRNA_sulfurtransferase_ThiI"/>
</dbReference>
<dbReference type="NCBIfam" id="TIGR04271">
    <property type="entry name" value="ThiI_C_thiazole"/>
    <property type="match status" value="1"/>
</dbReference>
<dbReference type="NCBIfam" id="TIGR00342">
    <property type="entry name" value="tRNA uracil 4-sulfurtransferase ThiI"/>
    <property type="match status" value="1"/>
</dbReference>
<dbReference type="PANTHER" id="PTHR43209">
    <property type="entry name" value="TRNA SULFURTRANSFERASE"/>
    <property type="match status" value="1"/>
</dbReference>
<dbReference type="PANTHER" id="PTHR43209:SF1">
    <property type="entry name" value="TRNA SULFURTRANSFERASE"/>
    <property type="match status" value="1"/>
</dbReference>
<dbReference type="Pfam" id="PF02568">
    <property type="entry name" value="ThiI"/>
    <property type="match status" value="1"/>
</dbReference>
<dbReference type="Pfam" id="PF22025">
    <property type="entry name" value="ThiI_fer"/>
    <property type="match status" value="1"/>
</dbReference>
<dbReference type="Pfam" id="PF02926">
    <property type="entry name" value="THUMP"/>
    <property type="match status" value="1"/>
</dbReference>
<dbReference type="SMART" id="SM00981">
    <property type="entry name" value="THUMP"/>
    <property type="match status" value="1"/>
</dbReference>
<dbReference type="SUPFAM" id="SSF52402">
    <property type="entry name" value="Adenine nucleotide alpha hydrolases-like"/>
    <property type="match status" value="1"/>
</dbReference>
<dbReference type="SUPFAM" id="SSF52821">
    <property type="entry name" value="Rhodanese/Cell cycle control phosphatase"/>
    <property type="match status" value="1"/>
</dbReference>
<dbReference type="SUPFAM" id="SSF143437">
    <property type="entry name" value="THUMP domain-like"/>
    <property type="match status" value="1"/>
</dbReference>
<dbReference type="PROSITE" id="PS50206">
    <property type="entry name" value="RHODANESE_3"/>
    <property type="match status" value="1"/>
</dbReference>
<dbReference type="PROSITE" id="PS51165">
    <property type="entry name" value="THUMP"/>
    <property type="match status" value="1"/>
</dbReference>